<name>MYG_PROGU</name>
<reference key="1">
    <citation type="journal article" date="1985" name="FEBS Lett.">
        <title>The myoglobin of rodents Proechimys guairae (casiragua) and Mus musculus (house mouse).</title>
        <authorList>
            <person name="Harris D.E."/>
            <person name="Gurnett A.M."/>
            <person name="Lehmann H."/>
            <person name="Joysey K.A."/>
        </authorList>
    </citation>
    <scope>PROTEIN SEQUENCE OF 2-154</scope>
</reference>
<keyword id="KW-0963">Cytoplasm</keyword>
<keyword id="KW-0903">Direct protein sequencing</keyword>
<keyword id="KW-0349">Heme</keyword>
<keyword id="KW-0408">Iron</keyword>
<keyword id="KW-0479">Metal-binding</keyword>
<keyword id="KW-0514">Muscle protein</keyword>
<keyword id="KW-0560">Oxidoreductase</keyword>
<keyword id="KW-0561">Oxygen transport</keyword>
<keyword id="KW-0597">Phosphoprotein</keyword>
<keyword id="KW-0813">Transport</keyword>
<comment type="function">
    <text evidence="1">Monomeric heme protein which primary function is to store oxygen and facilitate its diffusion within muscle tissues. Reversibly binds oxygen through a pentacoordinated heme iron and enables its timely and efficient release as needed during periods of heightened demand. Depending on the oxidative conditions of tissues and cells, and in addition to its ability to bind oxygen, it also has a nitrite reductase activity whereby it regulates the production of bioactive nitric oxide. Under stress conditions, like hypoxia and anoxia, it also protects cells against reactive oxygen species thanks to its pseudoperoxidase activity.</text>
</comment>
<comment type="catalytic activity">
    <reaction evidence="1">
        <text>Fe(III)-heme b-[protein] + nitric oxide + H2O = Fe(II)-heme b-[protein] + nitrite + 2 H(+)</text>
        <dbReference type="Rhea" id="RHEA:77711"/>
        <dbReference type="Rhea" id="RHEA-COMP:18975"/>
        <dbReference type="Rhea" id="RHEA-COMP:18976"/>
        <dbReference type="ChEBI" id="CHEBI:15377"/>
        <dbReference type="ChEBI" id="CHEBI:15378"/>
        <dbReference type="ChEBI" id="CHEBI:16301"/>
        <dbReference type="ChEBI" id="CHEBI:16480"/>
        <dbReference type="ChEBI" id="CHEBI:55376"/>
        <dbReference type="ChEBI" id="CHEBI:60344"/>
    </reaction>
    <physiologicalReaction direction="right-to-left" evidence="1">
        <dbReference type="Rhea" id="RHEA:77713"/>
    </physiologicalReaction>
</comment>
<comment type="catalytic activity">
    <reaction evidence="1">
        <text>H2O2 + AH2 = A + 2 H2O</text>
        <dbReference type="Rhea" id="RHEA:30275"/>
        <dbReference type="ChEBI" id="CHEBI:13193"/>
        <dbReference type="ChEBI" id="CHEBI:15377"/>
        <dbReference type="ChEBI" id="CHEBI:16240"/>
        <dbReference type="ChEBI" id="CHEBI:17499"/>
    </reaction>
</comment>
<comment type="subunit">
    <text evidence="2">Monomeric.</text>
</comment>
<comment type="subcellular location">
    <subcellularLocation>
        <location evidence="1">Cytoplasm</location>
        <location evidence="1">Sarcoplasm</location>
    </subcellularLocation>
</comment>
<comment type="similarity">
    <text evidence="7">Belongs to the globin family.</text>
</comment>
<sequence length="154" mass="16999">MGLSDGEWQLVLNVWGKVEGDLSGHGQEVLIRLFKGHPETLEKFDKFKHLKAEDEMRASEELKKHGTTVLTALGGILKKKGQHAAELAPLAQSHATKHKIPVKYLEFISEAIIQVLQSKHPGDFGADAQGAMSKALELFRNDIAAKYKELGFQG</sequence>
<dbReference type="EC" id="1.7.-.-" evidence="1"/>
<dbReference type="EC" id="1.11.1.-" evidence="1"/>
<dbReference type="PIR" id="A02486">
    <property type="entry name" value="MYKS"/>
</dbReference>
<dbReference type="SMR" id="P04249"/>
<dbReference type="GO" id="GO:0070062">
    <property type="term" value="C:extracellular exosome"/>
    <property type="evidence" value="ECO:0007669"/>
    <property type="project" value="TreeGrafter"/>
</dbReference>
<dbReference type="GO" id="GO:0016528">
    <property type="term" value="C:sarcoplasm"/>
    <property type="evidence" value="ECO:0000250"/>
    <property type="project" value="UniProtKB"/>
</dbReference>
<dbReference type="GO" id="GO:0020037">
    <property type="term" value="F:heme binding"/>
    <property type="evidence" value="ECO:0007669"/>
    <property type="project" value="InterPro"/>
</dbReference>
<dbReference type="GO" id="GO:0046872">
    <property type="term" value="F:metal ion binding"/>
    <property type="evidence" value="ECO:0007669"/>
    <property type="project" value="UniProtKB-KW"/>
</dbReference>
<dbReference type="GO" id="GO:0098809">
    <property type="term" value="F:nitrite reductase activity"/>
    <property type="evidence" value="ECO:0000250"/>
    <property type="project" value="UniProtKB"/>
</dbReference>
<dbReference type="GO" id="GO:0019825">
    <property type="term" value="F:oxygen binding"/>
    <property type="evidence" value="ECO:0007669"/>
    <property type="project" value="InterPro"/>
</dbReference>
<dbReference type="GO" id="GO:0005344">
    <property type="term" value="F:oxygen carrier activity"/>
    <property type="evidence" value="ECO:0000250"/>
    <property type="project" value="UniProtKB"/>
</dbReference>
<dbReference type="GO" id="GO:0004601">
    <property type="term" value="F:peroxidase activity"/>
    <property type="evidence" value="ECO:0000250"/>
    <property type="project" value="UniProtKB"/>
</dbReference>
<dbReference type="GO" id="GO:0019430">
    <property type="term" value="P:removal of superoxide radicals"/>
    <property type="evidence" value="ECO:0000250"/>
    <property type="project" value="UniProtKB"/>
</dbReference>
<dbReference type="CDD" id="cd08926">
    <property type="entry name" value="Mb"/>
    <property type="match status" value="1"/>
</dbReference>
<dbReference type="Gene3D" id="6.10.140.2100">
    <property type="match status" value="1"/>
</dbReference>
<dbReference type="Gene3D" id="6.10.140.2110">
    <property type="match status" value="1"/>
</dbReference>
<dbReference type="InterPro" id="IPR000971">
    <property type="entry name" value="Globin"/>
</dbReference>
<dbReference type="InterPro" id="IPR009050">
    <property type="entry name" value="Globin-like_sf"/>
</dbReference>
<dbReference type="InterPro" id="IPR002335">
    <property type="entry name" value="Myoglobin"/>
</dbReference>
<dbReference type="PANTHER" id="PTHR47132">
    <property type="entry name" value="MYOGLOBIN"/>
    <property type="match status" value="1"/>
</dbReference>
<dbReference type="PANTHER" id="PTHR47132:SF1">
    <property type="entry name" value="MYOGLOBIN"/>
    <property type="match status" value="1"/>
</dbReference>
<dbReference type="Pfam" id="PF00042">
    <property type="entry name" value="Globin"/>
    <property type="match status" value="1"/>
</dbReference>
<dbReference type="PRINTS" id="PR00613">
    <property type="entry name" value="MYOGLOBIN"/>
</dbReference>
<dbReference type="SUPFAM" id="SSF46458">
    <property type="entry name" value="Globin-like"/>
    <property type="match status" value="1"/>
</dbReference>
<dbReference type="PROSITE" id="PS01033">
    <property type="entry name" value="GLOBIN"/>
    <property type="match status" value="1"/>
</dbReference>
<protein>
    <recommendedName>
        <fullName>Myoglobin</fullName>
    </recommendedName>
    <alternativeName>
        <fullName evidence="1">Nitrite reductase MB</fullName>
        <ecNumber evidence="1">1.7.-.-</ecNumber>
    </alternativeName>
    <alternativeName>
        <fullName evidence="1">Pseudoperoxidase MB</fullName>
        <ecNumber evidence="1">1.11.1.-</ecNumber>
    </alternativeName>
</protein>
<evidence type="ECO:0000250" key="1">
    <source>
        <dbReference type="UniProtKB" id="P02144"/>
    </source>
</evidence>
<evidence type="ECO:0000250" key="2">
    <source>
        <dbReference type="UniProtKB" id="P02185"/>
    </source>
</evidence>
<evidence type="ECO:0000250" key="3">
    <source>
        <dbReference type="UniProtKB" id="P02189"/>
    </source>
</evidence>
<evidence type="ECO:0000250" key="4">
    <source>
        <dbReference type="UniProtKB" id="P04247"/>
    </source>
</evidence>
<evidence type="ECO:0000250" key="5">
    <source>
        <dbReference type="UniProtKB" id="P68082"/>
    </source>
</evidence>
<evidence type="ECO:0000250" key="6">
    <source>
        <dbReference type="UniProtKB" id="Q9QZ76"/>
    </source>
</evidence>
<evidence type="ECO:0000255" key="7">
    <source>
        <dbReference type="PROSITE-ProRule" id="PRU00238"/>
    </source>
</evidence>
<evidence type="ECO:0000269" key="8">
    <source>
    </source>
</evidence>
<feature type="initiator methionine" description="Removed" evidence="8">
    <location>
        <position position="1"/>
    </location>
</feature>
<feature type="chain" id="PRO_0000053339" description="Myoglobin">
    <location>
        <begin position="2"/>
        <end position="154"/>
    </location>
</feature>
<feature type="domain" description="Globin" evidence="7">
    <location>
        <begin position="2"/>
        <end position="148"/>
    </location>
</feature>
<feature type="binding site" evidence="5">
    <location>
        <position position="65"/>
    </location>
    <ligand>
        <name>nitrite</name>
        <dbReference type="ChEBI" id="CHEBI:16301"/>
    </ligand>
</feature>
<feature type="binding site" evidence="3 7">
    <location>
        <position position="65"/>
    </location>
    <ligand>
        <name>O2</name>
        <dbReference type="ChEBI" id="CHEBI:15379"/>
    </ligand>
</feature>
<feature type="binding site" description="proximal binding residue" evidence="1">
    <location>
        <position position="94"/>
    </location>
    <ligand>
        <name>heme b</name>
        <dbReference type="ChEBI" id="CHEBI:60344"/>
    </ligand>
    <ligandPart>
        <name>Fe</name>
        <dbReference type="ChEBI" id="CHEBI:18248"/>
    </ligandPart>
</feature>
<feature type="modified residue" description="Phosphoserine" evidence="6">
    <location>
        <position position="4"/>
    </location>
</feature>
<feature type="modified residue" description="Phosphothreonine" evidence="4">
    <location>
        <position position="68"/>
    </location>
</feature>
<gene>
    <name type="primary">MB</name>
</gene>
<proteinExistence type="evidence at protein level"/>
<organism>
    <name type="scientific">Proechimys guairae</name>
    <name type="common">Guaira spiny rat</name>
    <dbReference type="NCBI Taxonomy" id="10163"/>
    <lineage>
        <taxon>Eukaryota</taxon>
        <taxon>Metazoa</taxon>
        <taxon>Chordata</taxon>
        <taxon>Craniata</taxon>
        <taxon>Vertebrata</taxon>
        <taxon>Euteleostomi</taxon>
        <taxon>Mammalia</taxon>
        <taxon>Eutheria</taxon>
        <taxon>Euarchontoglires</taxon>
        <taxon>Glires</taxon>
        <taxon>Rodentia</taxon>
        <taxon>Hystricomorpha</taxon>
        <taxon>Echimyidae</taxon>
        <taxon>Proechimys</taxon>
    </lineage>
</organism>
<accession>P04249</accession>